<keyword id="KW-1185">Reference proteome</keyword>
<reference key="1">
    <citation type="journal article" date="2006" name="Nature">
        <title>DNA sequence of human chromosome 17 and analysis of rearrangement in the human lineage.</title>
        <authorList>
            <person name="Zody M.C."/>
            <person name="Garber M."/>
            <person name="Adams D.J."/>
            <person name="Sharpe T."/>
            <person name="Harrow J."/>
            <person name="Lupski J.R."/>
            <person name="Nicholson C."/>
            <person name="Searle S.M."/>
            <person name="Wilming L."/>
            <person name="Young S.K."/>
            <person name="Abouelleil A."/>
            <person name="Allen N.R."/>
            <person name="Bi W."/>
            <person name="Bloom T."/>
            <person name="Borowsky M.L."/>
            <person name="Bugalter B.E."/>
            <person name="Butler J."/>
            <person name="Chang J.L."/>
            <person name="Chen C.-K."/>
            <person name="Cook A."/>
            <person name="Corum B."/>
            <person name="Cuomo C.A."/>
            <person name="de Jong P.J."/>
            <person name="DeCaprio D."/>
            <person name="Dewar K."/>
            <person name="FitzGerald M."/>
            <person name="Gilbert J."/>
            <person name="Gibson R."/>
            <person name="Gnerre S."/>
            <person name="Goldstein S."/>
            <person name="Grafham D.V."/>
            <person name="Grocock R."/>
            <person name="Hafez N."/>
            <person name="Hagopian D.S."/>
            <person name="Hart E."/>
            <person name="Norman C.H."/>
            <person name="Humphray S."/>
            <person name="Jaffe D.B."/>
            <person name="Jones M."/>
            <person name="Kamal M."/>
            <person name="Khodiyar V.K."/>
            <person name="LaButti K."/>
            <person name="Laird G."/>
            <person name="Lehoczky J."/>
            <person name="Liu X."/>
            <person name="Lokyitsang T."/>
            <person name="Loveland J."/>
            <person name="Lui A."/>
            <person name="Macdonald P."/>
            <person name="Major J.E."/>
            <person name="Matthews L."/>
            <person name="Mauceli E."/>
            <person name="McCarroll S.A."/>
            <person name="Mihalev A.H."/>
            <person name="Mudge J."/>
            <person name="Nguyen C."/>
            <person name="Nicol R."/>
            <person name="O'Leary S.B."/>
            <person name="Osoegawa K."/>
            <person name="Schwartz D.C."/>
            <person name="Shaw-Smith C."/>
            <person name="Stankiewicz P."/>
            <person name="Steward C."/>
            <person name="Swarbreck D."/>
            <person name="Venkataraman V."/>
            <person name="Whittaker C.A."/>
            <person name="Yang X."/>
            <person name="Zimmer A.R."/>
            <person name="Bradley A."/>
            <person name="Hubbard T."/>
            <person name="Birren B.W."/>
            <person name="Rogers J."/>
            <person name="Lander E.S."/>
            <person name="Nusbaum C."/>
        </authorList>
    </citation>
    <scope>NUCLEOTIDE SEQUENCE [LARGE SCALE GENOMIC DNA]</scope>
</reference>
<reference key="2">
    <citation type="journal article" date="2004" name="Genome Res.">
        <title>The status, quality, and expansion of the NIH full-length cDNA project: the Mammalian Gene Collection (MGC).</title>
        <authorList>
            <consortium name="The MGC Project Team"/>
        </authorList>
    </citation>
    <scope>NUCLEOTIDE SEQUENCE [LARGE SCALE MRNA]</scope>
</reference>
<protein>
    <recommendedName>
        <fullName>Putative uncharacterized protein ASB16-AS1</fullName>
    </recommendedName>
    <alternativeName>
        <fullName>ASB16 antisense RNA 1</fullName>
    </alternativeName>
    <alternativeName>
        <fullName>ASB16 antisense gene protein 1</fullName>
    </alternativeName>
</protein>
<gene>
    <name type="primary">ASB16-AS1</name>
    <name type="synonym">C17orf65</name>
</gene>
<proteinExistence type="uncertain"/>
<accession>Q495Z4</accession>
<accession>Q495Z5</accession>
<accession>Q495Z6</accession>
<feature type="chain" id="PRO_0000286573" description="Putative uncharacterized protein ASB16-AS1">
    <location>
        <begin position="1"/>
        <end position="193"/>
    </location>
</feature>
<feature type="region of interest" description="Disordered" evidence="1">
    <location>
        <begin position="1"/>
        <end position="67"/>
    </location>
</feature>
<feature type="region of interest" description="Disordered" evidence="1">
    <location>
        <begin position="110"/>
        <end position="160"/>
    </location>
</feature>
<feature type="compositionally biased region" description="Low complexity" evidence="1">
    <location>
        <begin position="50"/>
        <end position="64"/>
    </location>
</feature>
<feature type="compositionally biased region" description="Low complexity" evidence="1">
    <location>
        <begin position="148"/>
        <end position="160"/>
    </location>
</feature>
<feature type="sequence variant" id="VAR_032127" description="In dbSNP:rs7217858.">
    <original>S</original>
    <variation>R</variation>
    <location>
        <position position="32"/>
    </location>
</feature>
<feature type="sequence variant" id="VAR_061623" description="In dbSNP:rs7212573.">
    <original>C</original>
    <variation>R</variation>
    <location>
        <position position="114"/>
    </location>
</feature>
<feature type="sequence conflict" description="In Ref. 1; AAI00968." evidence="2" ref="1">
    <original>R</original>
    <variation>Q</variation>
    <location>
        <position position="82"/>
    </location>
</feature>
<feature type="sequence conflict" description="In Ref. 1; AAI00967." evidence="2" ref="1">
    <original>T</original>
    <variation>M</variation>
    <location>
        <position position="112"/>
    </location>
</feature>
<organism>
    <name type="scientific">Homo sapiens</name>
    <name type="common">Human</name>
    <dbReference type="NCBI Taxonomy" id="9606"/>
    <lineage>
        <taxon>Eukaryota</taxon>
        <taxon>Metazoa</taxon>
        <taxon>Chordata</taxon>
        <taxon>Craniata</taxon>
        <taxon>Vertebrata</taxon>
        <taxon>Euteleostomi</taxon>
        <taxon>Mammalia</taxon>
        <taxon>Eutheria</taxon>
        <taxon>Euarchontoglires</taxon>
        <taxon>Primates</taxon>
        <taxon>Haplorrhini</taxon>
        <taxon>Catarrhini</taxon>
        <taxon>Hominidae</taxon>
        <taxon>Homo</taxon>
    </lineage>
</organism>
<dbReference type="EMBL" id="AC004596">
    <property type="status" value="NOT_ANNOTATED_CDS"/>
    <property type="molecule type" value="Genomic_DNA"/>
</dbReference>
<dbReference type="EMBL" id="BC100964">
    <property type="protein sequence ID" value="AAI00965.2"/>
    <property type="molecule type" value="mRNA"/>
</dbReference>
<dbReference type="EMBL" id="BC100965">
    <property type="protein sequence ID" value="AAI00966.1"/>
    <property type="molecule type" value="mRNA"/>
</dbReference>
<dbReference type="EMBL" id="BC100966">
    <property type="protein sequence ID" value="AAI00967.1"/>
    <property type="molecule type" value="mRNA"/>
</dbReference>
<dbReference type="EMBL" id="BC100967">
    <property type="protein sequence ID" value="AAI00968.1"/>
    <property type="molecule type" value="mRNA"/>
</dbReference>
<dbReference type="IntAct" id="Q495Z4">
    <property type="interactions" value="1"/>
</dbReference>
<dbReference type="iPTMnet" id="Q495Z4"/>
<dbReference type="PhosphoSitePlus" id="Q495Z4"/>
<dbReference type="BioMuta" id="HGNC:25442"/>
<dbReference type="AGR" id="HGNC:25442"/>
<dbReference type="GeneCards" id="ASB16-AS1"/>
<dbReference type="HGNC" id="HGNC:25442">
    <property type="gene designation" value="ASB16-AS1"/>
</dbReference>
<dbReference type="neXtProt" id="NX_Q495Z4"/>
<dbReference type="PharmGKB" id="PA142672248"/>
<dbReference type="InParanoid" id="Q495Z4"/>
<dbReference type="PAN-GO" id="Q495Z4">
    <property type="GO annotations" value="0 GO annotations based on evolutionary models"/>
</dbReference>
<dbReference type="PhylomeDB" id="Q495Z4"/>
<dbReference type="TreeFam" id="TF350684"/>
<dbReference type="PathwayCommons" id="Q495Z4"/>
<dbReference type="SignaLink" id="Q495Z4"/>
<dbReference type="ChiTaRS" id="ASB16-AS1">
    <property type="organism name" value="human"/>
</dbReference>
<dbReference type="Pharos" id="Q495Z4">
    <property type="development level" value="Tdark"/>
</dbReference>
<dbReference type="Proteomes" id="UP000005640">
    <property type="component" value="Unplaced"/>
</dbReference>
<dbReference type="RNAct" id="Q495Z4">
    <property type="molecule type" value="protein"/>
</dbReference>
<comment type="caution">
    <text evidence="2">Product of a dubious gene prediction.</text>
</comment>
<name>ASAS1_HUMAN</name>
<evidence type="ECO:0000256" key="1">
    <source>
        <dbReference type="SAM" id="MobiDB-lite"/>
    </source>
</evidence>
<evidence type="ECO:0000305" key="2"/>
<sequence>MSGPPSAPQGALAAPRSPAVRRKGLQAPSWGSPGRPAAHSPWACGPPHWGPQRGPRNAAAARPGPRSRWHKRCAAACGACARPPGHQLQPPGAGAPQPGVACSYLGPRPQRTPCSAQSRPGWCAGPRRRHAPGTEPHVAPGRAPPPRAGASPGSRLLPGSPSLLLPAATWRTWGQESKVLRKILKAWDPFSLL</sequence>